<reference key="1">
    <citation type="journal article" date="1985" name="Eur. J. Biochem.">
        <title>Cloning and sequence analysis of human genomic DNA encoding gamma subunit precursor of muscle acetylcholine receptor.</title>
        <authorList>
            <person name="Shibahara S."/>
            <person name="Kubo T."/>
            <person name="Perski H.J."/>
            <person name="Takahashi H."/>
            <person name="Noda M."/>
            <person name="Numa S."/>
        </authorList>
    </citation>
    <scope>NUCLEOTIDE SEQUENCE [GENOMIC DNA]</scope>
</reference>
<reference key="2">
    <citation type="journal article" date="1993" name="Eur. J. Biochem.">
        <title>Primary structure of the human muscle acetylcholine receptor. cDNA cloning of the gamma and epsilon subunits.</title>
        <authorList>
            <person name="Beeson D.M.W."/>
            <person name="Brydson M."/>
            <person name="Betty M."/>
            <person name="Jeremiah S."/>
            <person name="Povey S."/>
            <person name="Vincent A."/>
            <person name="Newsom-Davis J."/>
        </authorList>
    </citation>
    <scope>NUCLEOTIDE SEQUENCE [MRNA] (ISOFORM 1)</scope>
    <source>
        <tissue>Muscle fibroblast</tissue>
    </source>
</reference>
<reference key="3">
    <citation type="journal article" date="2004" name="Nat. Genet.">
        <title>Complete sequencing and characterization of 21,243 full-length human cDNAs.</title>
        <authorList>
            <person name="Ota T."/>
            <person name="Suzuki Y."/>
            <person name="Nishikawa T."/>
            <person name="Otsuki T."/>
            <person name="Sugiyama T."/>
            <person name="Irie R."/>
            <person name="Wakamatsu A."/>
            <person name="Hayashi K."/>
            <person name="Sato H."/>
            <person name="Nagai K."/>
            <person name="Kimura K."/>
            <person name="Makita H."/>
            <person name="Sekine M."/>
            <person name="Obayashi M."/>
            <person name="Nishi T."/>
            <person name="Shibahara T."/>
            <person name="Tanaka T."/>
            <person name="Ishii S."/>
            <person name="Yamamoto J."/>
            <person name="Saito K."/>
            <person name="Kawai Y."/>
            <person name="Isono Y."/>
            <person name="Nakamura Y."/>
            <person name="Nagahari K."/>
            <person name="Murakami K."/>
            <person name="Yasuda T."/>
            <person name="Iwayanagi T."/>
            <person name="Wagatsuma M."/>
            <person name="Shiratori A."/>
            <person name="Sudo H."/>
            <person name="Hosoiri T."/>
            <person name="Kaku Y."/>
            <person name="Kodaira H."/>
            <person name="Kondo H."/>
            <person name="Sugawara M."/>
            <person name="Takahashi M."/>
            <person name="Kanda K."/>
            <person name="Yokoi T."/>
            <person name="Furuya T."/>
            <person name="Kikkawa E."/>
            <person name="Omura Y."/>
            <person name="Abe K."/>
            <person name="Kamihara K."/>
            <person name="Katsuta N."/>
            <person name="Sato K."/>
            <person name="Tanikawa M."/>
            <person name="Yamazaki M."/>
            <person name="Ninomiya K."/>
            <person name="Ishibashi T."/>
            <person name="Yamashita H."/>
            <person name="Murakawa K."/>
            <person name="Fujimori K."/>
            <person name="Tanai H."/>
            <person name="Kimata M."/>
            <person name="Watanabe M."/>
            <person name="Hiraoka S."/>
            <person name="Chiba Y."/>
            <person name="Ishida S."/>
            <person name="Ono Y."/>
            <person name="Takiguchi S."/>
            <person name="Watanabe S."/>
            <person name="Yosida M."/>
            <person name="Hotuta T."/>
            <person name="Kusano J."/>
            <person name="Kanehori K."/>
            <person name="Takahashi-Fujii A."/>
            <person name="Hara H."/>
            <person name="Tanase T.-O."/>
            <person name="Nomura Y."/>
            <person name="Togiya S."/>
            <person name="Komai F."/>
            <person name="Hara R."/>
            <person name="Takeuchi K."/>
            <person name="Arita M."/>
            <person name="Imose N."/>
            <person name="Musashino K."/>
            <person name="Yuuki H."/>
            <person name="Oshima A."/>
            <person name="Sasaki N."/>
            <person name="Aotsuka S."/>
            <person name="Yoshikawa Y."/>
            <person name="Matsunawa H."/>
            <person name="Ichihara T."/>
            <person name="Shiohata N."/>
            <person name="Sano S."/>
            <person name="Moriya S."/>
            <person name="Momiyama H."/>
            <person name="Satoh N."/>
            <person name="Takami S."/>
            <person name="Terashima Y."/>
            <person name="Suzuki O."/>
            <person name="Nakagawa S."/>
            <person name="Senoh A."/>
            <person name="Mizoguchi H."/>
            <person name="Goto Y."/>
            <person name="Shimizu F."/>
            <person name="Wakebe H."/>
            <person name="Hishigaki H."/>
            <person name="Watanabe T."/>
            <person name="Sugiyama A."/>
            <person name="Takemoto M."/>
            <person name="Kawakami B."/>
            <person name="Yamazaki M."/>
            <person name="Watanabe K."/>
            <person name="Kumagai A."/>
            <person name="Itakura S."/>
            <person name="Fukuzumi Y."/>
            <person name="Fujimori Y."/>
            <person name="Komiyama M."/>
            <person name="Tashiro H."/>
            <person name="Tanigami A."/>
            <person name="Fujiwara T."/>
            <person name="Ono T."/>
            <person name="Yamada K."/>
            <person name="Fujii Y."/>
            <person name="Ozaki K."/>
            <person name="Hirao M."/>
            <person name="Ohmori Y."/>
            <person name="Kawabata A."/>
            <person name="Hikiji T."/>
            <person name="Kobatake N."/>
            <person name="Inagaki H."/>
            <person name="Ikema Y."/>
            <person name="Okamoto S."/>
            <person name="Okitani R."/>
            <person name="Kawakami T."/>
            <person name="Noguchi S."/>
            <person name="Itoh T."/>
            <person name="Shigeta K."/>
            <person name="Senba T."/>
            <person name="Matsumura K."/>
            <person name="Nakajima Y."/>
            <person name="Mizuno T."/>
            <person name="Morinaga M."/>
            <person name="Sasaki M."/>
            <person name="Togashi T."/>
            <person name="Oyama M."/>
            <person name="Hata H."/>
            <person name="Watanabe M."/>
            <person name="Komatsu T."/>
            <person name="Mizushima-Sugano J."/>
            <person name="Satoh T."/>
            <person name="Shirai Y."/>
            <person name="Takahashi Y."/>
            <person name="Nakagawa K."/>
            <person name="Okumura K."/>
            <person name="Nagase T."/>
            <person name="Nomura N."/>
            <person name="Kikuchi H."/>
            <person name="Masuho Y."/>
            <person name="Yamashita R."/>
            <person name="Nakai K."/>
            <person name="Yada T."/>
            <person name="Nakamura Y."/>
            <person name="Ohara O."/>
            <person name="Isogai T."/>
            <person name="Sugano S."/>
        </authorList>
    </citation>
    <scope>NUCLEOTIDE SEQUENCE [LARGE SCALE MRNA] (ISOFORM 1)</scope>
    <source>
        <tissue>Tongue</tissue>
    </source>
</reference>
<reference key="4">
    <citation type="journal article" date="2005" name="Nature">
        <title>Generation and annotation of the DNA sequences of human chromosomes 2 and 4.</title>
        <authorList>
            <person name="Hillier L.W."/>
            <person name="Graves T.A."/>
            <person name="Fulton R.S."/>
            <person name="Fulton L.A."/>
            <person name="Pepin K.H."/>
            <person name="Minx P."/>
            <person name="Wagner-McPherson C."/>
            <person name="Layman D."/>
            <person name="Wylie K."/>
            <person name="Sekhon M."/>
            <person name="Becker M.C."/>
            <person name="Fewell G.A."/>
            <person name="Delehaunty K.D."/>
            <person name="Miner T.L."/>
            <person name="Nash W.E."/>
            <person name="Kremitzki C."/>
            <person name="Oddy L."/>
            <person name="Du H."/>
            <person name="Sun H."/>
            <person name="Bradshaw-Cordum H."/>
            <person name="Ali J."/>
            <person name="Carter J."/>
            <person name="Cordes M."/>
            <person name="Harris A."/>
            <person name="Isak A."/>
            <person name="van Brunt A."/>
            <person name="Nguyen C."/>
            <person name="Du F."/>
            <person name="Courtney L."/>
            <person name="Kalicki J."/>
            <person name="Ozersky P."/>
            <person name="Abbott S."/>
            <person name="Armstrong J."/>
            <person name="Belter E.A."/>
            <person name="Caruso L."/>
            <person name="Cedroni M."/>
            <person name="Cotton M."/>
            <person name="Davidson T."/>
            <person name="Desai A."/>
            <person name="Elliott G."/>
            <person name="Erb T."/>
            <person name="Fronick C."/>
            <person name="Gaige T."/>
            <person name="Haakenson W."/>
            <person name="Haglund K."/>
            <person name="Holmes A."/>
            <person name="Harkins R."/>
            <person name="Kim K."/>
            <person name="Kruchowski S.S."/>
            <person name="Strong C.M."/>
            <person name="Grewal N."/>
            <person name="Goyea E."/>
            <person name="Hou S."/>
            <person name="Levy A."/>
            <person name="Martinka S."/>
            <person name="Mead K."/>
            <person name="McLellan M.D."/>
            <person name="Meyer R."/>
            <person name="Randall-Maher J."/>
            <person name="Tomlinson C."/>
            <person name="Dauphin-Kohlberg S."/>
            <person name="Kozlowicz-Reilly A."/>
            <person name="Shah N."/>
            <person name="Swearengen-Shahid S."/>
            <person name="Snider J."/>
            <person name="Strong J.T."/>
            <person name="Thompson J."/>
            <person name="Yoakum M."/>
            <person name="Leonard S."/>
            <person name="Pearman C."/>
            <person name="Trani L."/>
            <person name="Radionenko M."/>
            <person name="Waligorski J.E."/>
            <person name="Wang C."/>
            <person name="Rock S.M."/>
            <person name="Tin-Wollam A.-M."/>
            <person name="Maupin R."/>
            <person name="Latreille P."/>
            <person name="Wendl M.C."/>
            <person name="Yang S.-P."/>
            <person name="Pohl C."/>
            <person name="Wallis J.W."/>
            <person name="Spieth J."/>
            <person name="Bieri T.A."/>
            <person name="Berkowicz N."/>
            <person name="Nelson J.O."/>
            <person name="Osborne J."/>
            <person name="Ding L."/>
            <person name="Meyer R."/>
            <person name="Sabo A."/>
            <person name="Shotland Y."/>
            <person name="Sinha P."/>
            <person name="Wohldmann P.E."/>
            <person name="Cook L.L."/>
            <person name="Hickenbotham M.T."/>
            <person name="Eldred J."/>
            <person name="Williams D."/>
            <person name="Jones T.A."/>
            <person name="She X."/>
            <person name="Ciccarelli F.D."/>
            <person name="Izaurralde E."/>
            <person name="Taylor J."/>
            <person name="Schmutz J."/>
            <person name="Myers R.M."/>
            <person name="Cox D.R."/>
            <person name="Huang X."/>
            <person name="McPherson J.D."/>
            <person name="Mardis E.R."/>
            <person name="Clifton S.W."/>
            <person name="Warren W.C."/>
            <person name="Chinwalla A.T."/>
            <person name="Eddy S.R."/>
            <person name="Marra M.A."/>
            <person name="Ovcharenko I."/>
            <person name="Furey T.S."/>
            <person name="Miller W."/>
            <person name="Eichler E.E."/>
            <person name="Bork P."/>
            <person name="Suyama M."/>
            <person name="Torrents D."/>
            <person name="Waterston R.H."/>
            <person name="Wilson R.K."/>
        </authorList>
    </citation>
    <scope>NUCLEOTIDE SEQUENCE [LARGE SCALE GENOMIC DNA]</scope>
</reference>
<reference key="5">
    <citation type="journal article" date="2004" name="Genome Res.">
        <title>The status, quality, and expansion of the NIH full-length cDNA project: the Mammalian Gene Collection (MGC).</title>
        <authorList>
            <consortium name="The MGC Project Team"/>
        </authorList>
    </citation>
    <scope>NUCLEOTIDE SEQUENCE [LARGE SCALE MRNA] (ISOFORM 2)</scope>
</reference>
<reference key="6">
    <citation type="journal article" date="2006" name="Am. J. Hum. Genet.">
        <title>Escobar syndrome is a prenatal myasthenia caused by disruption of the acetylcholine receptor fetal gamma subunit.</title>
        <authorList>
            <person name="Hoffmann K."/>
            <person name="Mueller J.S."/>
            <person name="Stricker S."/>
            <person name="Megarbane A."/>
            <person name="Rajab A."/>
            <person name="Lindner T.H."/>
            <person name="Cohen M."/>
            <person name="Chouery E."/>
            <person name="Adaimy L."/>
            <person name="Ghanem I."/>
            <person name="Delague V."/>
            <person name="Boltshauser E."/>
            <person name="Talim B."/>
            <person name="Horvath R."/>
            <person name="Robinson P.N."/>
            <person name="Lochmueller H."/>
            <person name="Huebner C."/>
            <person name="Mundlos S."/>
        </authorList>
    </citation>
    <scope>VARIANT EVMPS CYS-239</scope>
    <scope>VARIANT LMPS CYS-239</scope>
</reference>
<reference key="7">
    <citation type="journal article" date="2006" name="Am. J. Hum. Genet.">
        <title>Mutations in the embryonal subunit of the acetylcholine receptor (CHRNG) cause lethal and Escobar variants of multiple pterygium syndrome.</title>
        <authorList>
            <person name="Morgan N.V."/>
            <person name="Brueton L.A."/>
            <person name="Cox P."/>
            <person name="Greally M.T."/>
            <person name="Tolmie J."/>
            <person name="Pasha S."/>
            <person name="Aligianis I.A."/>
            <person name="van Bokhoven H."/>
            <person name="Marton T."/>
            <person name="Al-Gazali L."/>
            <person name="Morton J.E.V."/>
            <person name="Oley C."/>
            <person name="Johnson C.A."/>
            <person name="Trembath R.C."/>
            <person name="Brunner H.G."/>
            <person name="Maher E.R."/>
        </authorList>
    </citation>
    <scope>VARIANT EVMPS GLY-107</scope>
    <scope>VARIANT LMPS GLY-107</scope>
</reference>
<accession>P07510</accession>
<accession>B3KWM8</accession>
<accession>Q14DU4</accession>
<accession>Q53RG2</accession>
<organism>
    <name type="scientific">Homo sapiens</name>
    <name type="common">Human</name>
    <dbReference type="NCBI Taxonomy" id="9606"/>
    <lineage>
        <taxon>Eukaryota</taxon>
        <taxon>Metazoa</taxon>
        <taxon>Chordata</taxon>
        <taxon>Craniata</taxon>
        <taxon>Vertebrata</taxon>
        <taxon>Euteleostomi</taxon>
        <taxon>Mammalia</taxon>
        <taxon>Eutheria</taxon>
        <taxon>Euarchontoglires</taxon>
        <taxon>Primates</taxon>
        <taxon>Haplorrhini</taxon>
        <taxon>Catarrhini</taxon>
        <taxon>Hominidae</taxon>
        <taxon>Homo</taxon>
    </lineage>
</organism>
<gene>
    <name evidence="8" type="primary">CHRNG</name>
    <name type="synonym">ACHRG</name>
</gene>
<comment type="function">
    <text>After binding acetylcholine, the AChR responds by an extensive change in conformation that affects all subunits and leads to opening of an ion-conducting channel across the plasma membrane.</text>
</comment>
<comment type="catalytic activity">
    <reaction evidence="2">
        <text>K(+)(in) = K(+)(out)</text>
        <dbReference type="Rhea" id="RHEA:29463"/>
        <dbReference type="ChEBI" id="CHEBI:29103"/>
    </reaction>
</comment>
<comment type="catalytic activity">
    <reaction evidence="2">
        <text>Na(+)(in) = Na(+)(out)</text>
        <dbReference type="Rhea" id="RHEA:34963"/>
        <dbReference type="ChEBI" id="CHEBI:29101"/>
    </reaction>
</comment>
<comment type="subunit">
    <text>Pentamer of two alpha chains, and one each of the beta, delta, and gamma (in immature muscle) or epsilon (in mature muscle) chains.</text>
</comment>
<comment type="interaction">
    <interactant intactId="EBI-9008836">
        <id>P07510</id>
    </interactant>
    <interactant intactId="EBI-948001">
        <id>Q15323</id>
        <label>KRT31</label>
    </interactant>
    <organismsDiffer>false</organismsDiffer>
    <experiments>4</experiments>
</comment>
<comment type="interaction">
    <interactant intactId="EBI-9008836">
        <id>P07510</id>
    </interactant>
    <interactant intactId="EBI-10172290">
        <id>P60409</id>
        <label>KRTAP10-7</label>
    </interactant>
    <organismsDiffer>false</organismsDiffer>
    <experiments>4</experiments>
</comment>
<comment type="interaction">
    <interactant intactId="EBI-9008836">
        <id>P07510</id>
    </interactant>
    <interactant intactId="EBI-10171774">
        <id>P60410</id>
        <label>KRTAP10-8</label>
    </interactant>
    <organismsDiffer>false</organismsDiffer>
    <experiments>4</experiments>
</comment>
<comment type="interaction">
    <interactant intactId="EBI-9008836">
        <id>P07510</id>
    </interactant>
    <interactant intactId="EBI-10172052">
        <id>P60411</id>
        <label>KRTAP10-9</label>
    </interactant>
    <organismsDiffer>false</organismsDiffer>
    <experiments>4</experiments>
</comment>
<comment type="interaction">
    <interactant intactId="EBI-9008836">
        <id>P07510</id>
    </interactant>
    <interactant intactId="EBI-945833">
        <id>Q7Z3S9</id>
        <label>NOTCH2NLA</label>
    </interactant>
    <organismsDiffer>false</organismsDiffer>
    <experiments>5</experiments>
</comment>
<comment type="interaction">
    <interactant intactId="EBI-11979451">
        <id>P07510-2</id>
    </interactant>
    <interactant intactId="EBI-10173507">
        <id>Q6UY14-3</id>
        <label>ADAMTSL4</label>
    </interactant>
    <organismsDiffer>false</organismsDiffer>
    <experiments>3</experiments>
</comment>
<comment type="interaction">
    <interactant intactId="EBI-11979451">
        <id>P07510-2</id>
    </interactant>
    <interactant intactId="EBI-3867333">
        <id>A8MQ03</id>
        <label>CYSRT1</label>
    </interactant>
    <organismsDiffer>false</organismsDiffer>
    <experiments>3</experiments>
</comment>
<comment type="interaction">
    <interactant intactId="EBI-11979451">
        <id>P07510-2</id>
    </interactant>
    <interactant intactId="EBI-948001">
        <id>Q15323</id>
        <label>KRT31</label>
    </interactant>
    <organismsDiffer>false</organismsDiffer>
    <experiments>6</experiments>
</comment>
<comment type="interaction">
    <interactant intactId="EBI-11979451">
        <id>P07510-2</id>
    </interactant>
    <interactant intactId="EBI-1047093">
        <id>O76011</id>
        <label>KRT34</label>
    </interactant>
    <organismsDiffer>false</organismsDiffer>
    <experiments>3</experiments>
</comment>
<comment type="interaction">
    <interactant intactId="EBI-11979451">
        <id>P07510-2</id>
    </interactant>
    <interactant intactId="EBI-11959885">
        <id>Q07627</id>
        <label>KRTAP1-1</label>
    </interactant>
    <organismsDiffer>false</organismsDiffer>
    <experiments>3</experiments>
</comment>
<comment type="interaction">
    <interactant intactId="EBI-11979451">
        <id>P07510-2</id>
    </interactant>
    <interactant intactId="EBI-11749135">
        <id>Q8IUG1</id>
        <label>KRTAP1-3</label>
    </interactant>
    <organismsDiffer>false</organismsDiffer>
    <experiments>3</experiments>
</comment>
<comment type="interaction">
    <interactant intactId="EBI-11979451">
        <id>P07510-2</id>
    </interactant>
    <interactant intactId="EBI-10172290">
        <id>P60409</id>
        <label>KRTAP10-7</label>
    </interactant>
    <organismsDiffer>false</organismsDiffer>
    <experiments>3</experiments>
</comment>
<comment type="interaction">
    <interactant intactId="EBI-11979451">
        <id>P07510-2</id>
    </interactant>
    <interactant intactId="EBI-10171774">
        <id>P60410</id>
        <label>KRTAP10-8</label>
    </interactant>
    <organismsDiffer>false</organismsDiffer>
    <experiments>6</experiments>
</comment>
<comment type="interaction">
    <interactant intactId="EBI-11979451">
        <id>P07510-2</id>
    </interactant>
    <interactant intactId="EBI-10172052">
        <id>P60411</id>
        <label>KRTAP10-9</label>
    </interactant>
    <organismsDiffer>false</organismsDiffer>
    <experiments>6</experiments>
</comment>
<comment type="interaction">
    <interactant intactId="EBI-11979451">
        <id>P07510-2</id>
    </interactant>
    <interactant intactId="EBI-11953334">
        <id>P60328</id>
        <label>KRTAP12-3</label>
    </interactant>
    <organismsDiffer>false</organismsDiffer>
    <experiments>3</experiments>
</comment>
<comment type="interaction">
    <interactant intactId="EBI-11979451">
        <id>P07510-2</id>
    </interactant>
    <interactant intactId="EBI-3958099">
        <id>P26371</id>
        <label>KRTAP5-9</label>
    </interactant>
    <organismsDiffer>false</organismsDiffer>
    <experiments>3</experiments>
</comment>
<comment type="interaction">
    <interactant intactId="EBI-11979451">
        <id>P07510-2</id>
    </interactant>
    <interactant intactId="EBI-1043191">
        <id>Q9BYQ3</id>
        <label>KRTAP9-3</label>
    </interactant>
    <organismsDiffer>false</organismsDiffer>
    <experiments>3</experiments>
</comment>
<comment type="interaction">
    <interactant intactId="EBI-11979451">
        <id>P07510-2</id>
    </interactant>
    <interactant intactId="EBI-724076">
        <id>Q99750</id>
        <label>MDFI</label>
    </interactant>
    <organismsDiffer>false</organismsDiffer>
    <experiments>6</experiments>
</comment>
<comment type="interaction">
    <interactant intactId="EBI-11979451">
        <id>P07510-2</id>
    </interactant>
    <interactant intactId="EBI-748397">
        <id>P50222</id>
        <label>MEOX2</label>
    </interactant>
    <organismsDiffer>false</organismsDiffer>
    <experiments>3</experiments>
</comment>
<comment type="interaction">
    <interactant intactId="EBI-11979451">
        <id>P07510-2</id>
    </interactant>
    <interactant intactId="EBI-945833">
        <id>Q7Z3S9</id>
        <label>NOTCH2NLA</label>
    </interactant>
    <organismsDiffer>false</organismsDiffer>
    <experiments>3</experiments>
</comment>
<comment type="interaction">
    <interactant intactId="EBI-11979451">
        <id>P07510-2</id>
    </interactant>
    <interactant intactId="EBI-22310682">
        <id>P0DPK4</id>
        <label>NOTCH2NLC</label>
    </interactant>
    <organismsDiffer>false</organismsDiffer>
    <experiments>3</experiments>
</comment>
<comment type="interaction">
    <interactant intactId="EBI-11979451">
        <id>P07510-2</id>
    </interactant>
    <interactant intactId="EBI-347996">
        <id>O43765</id>
        <label>SGTA</label>
    </interactant>
    <organismsDiffer>false</organismsDiffer>
    <experiments>3</experiments>
</comment>
<comment type="interaction">
    <interactant intactId="EBI-11979451">
        <id>P07510-2</id>
    </interactant>
    <interactant intactId="EBI-2822329">
        <id>Q13596</id>
        <label>SNX1</label>
    </interactant>
    <organismsDiffer>false</organismsDiffer>
    <experiments>3</experiments>
</comment>
<comment type="interaction">
    <interactant intactId="EBI-11979451">
        <id>P07510-2</id>
    </interactant>
    <interactant intactId="EBI-742487">
        <id>O43597</id>
        <label>SPRY2</label>
    </interactant>
    <organismsDiffer>false</organismsDiffer>
    <experiments>3</experiments>
</comment>
<comment type="subcellular location">
    <subcellularLocation>
        <location>Postsynaptic cell membrane</location>
        <topology>Multi-pass membrane protein</topology>
    </subcellularLocation>
    <subcellularLocation>
        <location>Cell membrane</location>
        <topology>Multi-pass membrane protein</topology>
    </subcellularLocation>
</comment>
<comment type="alternative products">
    <event type="alternative splicing"/>
    <isoform>
        <id>P07510-1</id>
        <name>1</name>
        <sequence type="displayed"/>
    </isoform>
    <isoform>
        <id>P07510-2</id>
        <name>2</name>
        <sequence type="described" ref="VSP_055775"/>
    </isoform>
</comment>
<comment type="disease" evidence="4 5">
    <disease id="DI-01895">
        <name>Multiple pterygium syndrome, lethal type</name>
        <acronym>LMPS</acronym>
        <description>Multiple pterygia are found infrequently in children with arthrogryposis and in fetuses with fetal akinesia syndrome. In lethal multiple pterygium syndrome there is intrauterine growth retardation, multiple pterygia, and flexion contractures causing severe arthrogryposis and fetal akinesia. Subcutaneous edema can be severe, causing fetal hydrops with cystic hygroma and lung hypoplasia. Oligohydramnios and facial anomalies are frequent.</description>
        <dbReference type="MIM" id="253290"/>
    </disease>
    <text>The disease is caused by variants affecting the gene represented in this entry.</text>
</comment>
<comment type="disease" evidence="4 5">
    <disease id="DI-01536">
        <name>Multiple pterygium syndrome, Escobar variant</name>
        <acronym>EVMPS</acronym>
        <description>Non-lethal form of arthrogryposis multiplex congenita. It is an autosomal recessive condition characterized by excessive webbing (pterygia), congenital contractures (arthrogryposis), and scoliosis. Variable other features include intrauterine death, congenital respiratory distress, short stature, faciocranial dysmorphism, ptosis, low-set ears, arachnodactyly and cryptorchism in males. Congenital contractures are common and may be caused by reduced fetal movements at sensitive times of development. Possible causes of decreased fetal mobility include space constraints such as oligohydramnion, drugs, metabolic conditions or neuromuscular disorders including myasthenia gravis.</description>
        <dbReference type="MIM" id="265000"/>
    </disease>
    <text>The disease is caused by variants affecting the gene represented in this entry.</text>
</comment>
<comment type="similarity">
    <text evidence="7">Belongs to the ligand-gated ion channel (TC 1.A.9) family. Acetylcholine receptor (TC 1.A.9.1) subfamily. Gamma/CHRNG sub-subfamily.</text>
</comment>
<comment type="sequence caution" evidence="7">
    <conflict type="erroneous gene model prediction">
        <sequence resource="EMBL-CDS" id="AAY24103"/>
    </conflict>
</comment>
<comment type="sequence caution" evidence="7">
    <conflict type="erroneous gene model prediction">
        <sequence resource="EMBL-CDS" id="CAA25861"/>
    </conflict>
</comment>
<sequence length="517" mass="57883">MHGGQGPLLLLLLLAVCLGAQGRNQEERLLADLMQNYDPNLRPAERDSDVVNVSLKLTLTNLISLNEREEALTTNVWIEMQWCDYRLRWDPRDYEGLWVLRVPSTMVWRPDIVLENNVDGVFEVALYCNVLVSPDGCIYWLPPAIFRSACSISVTYFPFDWQNCSLIFQSQTYSTNEIDLQLSQEDGQTIEWIFIDPEAFTENGEWAIQHRPAKMLLDPAAPAQEAGHQKVVFYLLIQRKPLFYVINIIAPCVLISSVAILIHFLPAKAGGQKCTVAINVLLAQTVFLFLVAKKVPETSQAVPLISKYLTFLLVVTILIVVNAVVVLNVSLRSPHTHSMARGVRKVFLRLLPQLLRMHVRPLAPAAVQDTQSRLQNGSSGWSITTGEEVALCLPRSELLFQQWQRQGLVAAALEKLEKGPELGLSQFCGSLKQAAPAIQACVEACNLIACARHQQSHFDNGNEEWFLVGRVLDRVCFLAMLSLFICGTAGIFLMAHYNRVPALPFPGDPRPYLPSPD</sequence>
<keyword id="KW-0025">Alternative splicing</keyword>
<keyword id="KW-1003">Cell membrane</keyword>
<keyword id="KW-0225">Disease variant</keyword>
<keyword id="KW-1015">Disulfide bond</keyword>
<keyword id="KW-0325">Glycoprotein</keyword>
<keyword id="KW-0407">Ion channel</keyword>
<keyword id="KW-0406">Ion transport</keyword>
<keyword id="KW-1071">Ligand-gated ion channel</keyword>
<keyword id="KW-0472">Membrane</keyword>
<keyword id="KW-0628">Postsynaptic cell membrane</keyword>
<keyword id="KW-0675">Receptor</keyword>
<keyword id="KW-1185">Reference proteome</keyword>
<keyword id="KW-0732">Signal</keyword>
<keyword id="KW-0770">Synapse</keyword>
<keyword id="KW-0812">Transmembrane</keyword>
<keyword id="KW-1133">Transmembrane helix</keyword>
<keyword id="KW-0813">Transport</keyword>
<proteinExistence type="evidence at protein level"/>
<dbReference type="EMBL" id="X01715">
    <property type="protein sequence ID" value="CAA25861.1"/>
    <property type="status" value="ALT_SEQ"/>
    <property type="molecule type" value="Genomic_DNA"/>
</dbReference>
<dbReference type="EMBL" id="X01716">
    <property type="protein sequence ID" value="CAA25861.1"/>
    <property type="status" value="JOINED"/>
    <property type="molecule type" value="Genomic_DNA"/>
</dbReference>
<dbReference type="EMBL" id="X01717">
    <property type="protein sequence ID" value="CAA25861.1"/>
    <property type="status" value="JOINED"/>
    <property type="molecule type" value="Genomic_DNA"/>
</dbReference>
<dbReference type="EMBL" id="X01718">
    <property type="protein sequence ID" value="CAA25861.1"/>
    <property type="status" value="JOINED"/>
    <property type="molecule type" value="Genomic_DNA"/>
</dbReference>
<dbReference type="EMBL" id="X01719">
    <property type="protein sequence ID" value="CAA25861.1"/>
    <property type="status" value="JOINED"/>
    <property type="molecule type" value="Genomic_DNA"/>
</dbReference>
<dbReference type="EMBL" id="X01720">
    <property type="protein sequence ID" value="CAA25861.1"/>
    <property type="status" value="JOINED"/>
    <property type="molecule type" value="Genomic_DNA"/>
</dbReference>
<dbReference type="EMBL" id="X01721">
    <property type="protein sequence ID" value="CAA25861.1"/>
    <property type="status" value="JOINED"/>
    <property type="molecule type" value="Genomic_DNA"/>
</dbReference>
<dbReference type="EMBL" id="X04759">
    <property type="protein sequence ID" value="CAA25861.1"/>
    <property type="status" value="JOINED"/>
    <property type="molecule type" value="Genomic_DNA"/>
</dbReference>
<dbReference type="EMBL" id="AK125362">
    <property type="protein sequence ID" value="BAG54190.1"/>
    <property type="molecule type" value="mRNA"/>
</dbReference>
<dbReference type="EMBL" id="AC092165">
    <property type="protein sequence ID" value="AAY24103.1"/>
    <property type="status" value="ALT_SEQ"/>
    <property type="molecule type" value="Genomic_DNA"/>
</dbReference>
<dbReference type="EMBL" id="BC111802">
    <property type="protein sequence ID" value="AAI11803.1"/>
    <property type="molecule type" value="mRNA"/>
</dbReference>
<dbReference type="CCDS" id="CCDS33400.1">
    <molecule id="P07510-1"/>
</dbReference>
<dbReference type="PIR" id="A23261">
    <property type="entry name" value="A23261"/>
</dbReference>
<dbReference type="RefSeq" id="NP_005190.4">
    <molecule id="P07510-1"/>
    <property type="nucleotide sequence ID" value="NM_005199.4"/>
</dbReference>
<dbReference type="SMR" id="P07510"/>
<dbReference type="BioGRID" id="107568">
    <property type="interactions" value="22"/>
</dbReference>
<dbReference type="ComplexPortal" id="CPX-2179">
    <property type="entry name" value="Muscle-type nicotinic acetylcholine receptor complex, alpha1-beta1-delta-gamma"/>
</dbReference>
<dbReference type="FunCoup" id="P07510">
    <property type="interactions" value="408"/>
</dbReference>
<dbReference type="IntAct" id="P07510">
    <property type="interactions" value="21"/>
</dbReference>
<dbReference type="STRING" id="9606.ENSP00000498757"/>
<dbReference type="BindingDB" id="P07510"/>
<dbReference type="ChEMBL" id="CHEMBL1907588"/>
<dbReference type="DrugCentral" id="P07510"/>
<dbReference type="TCDB" id="1.A.9.1.1">
    <property type="family name" value="the neurotransmitter receptor, cys loop, ligand-gated ion channel (lic) family"/>
</dbReference>
<dbReference type="GlyCosmos" id="P07510">
    <property type="glycosylation" value="2 sites, No reported glycans"/>
</dbReference>
<dbReference type="GlyGen" id="P07510">
    <property type="glycosylation" value="2 sites"/>
</dbReference>
<dbReference type="iPTMnet" id="P07510"/>
<dbReference type="PhosphoSitePlus" id="P07510"/>
<dbReference type="BioMuta" id="CHRNG"/>
<dbReference type="DMDM" id="126302510"/>
<dbReference type="jPOST" id="P07510"/>
<dbReference type="MassIVE" id="P07510"/>
<dbReference type="PaxDb" id="9606-ENSP00000374145"/>
<dbReference type="PeptideAtlas" id="P07510"/>
<dbReference type="ProteomicsDB" id="52012">
    <molecule id="P07510-1"/>
</dbReference>
<dbReference type="ABCD" id="P07510">
    <property type="antibodies" value="2 sequenced antibodies"/>
</dbReference>
<dbReference type="Antibodypedia" id="20220">
    <property type="antibodies" value="133 antibodies from 27 providers"/>
</dbReference>
<dbReference type="DNASU" id="1146"/>
<dbReference type="Ensembl" id="ENST00000389492.3">
    <molecule id="P07510-2"/>
    <property type="protein sequence ID" value="ENSP00000374143.3"/>
    <property type="gene ID" value="ENSG00000196811.13"/>
</dbReference>
<dbReference type="Ensembl" id="ENST00000651502.1">
    <molecule id="P07510-1"/>
    <property type="protein sequence ID" value="ENSP00000498757.1"/>
    <property type="gene ID" value="ENSG00000196811.13"/>
</dbReference>
<dbReference type="GeneID" id="1146"/>
<dbReference type="KEGG" id="hsa:1146"/>
<dbReference type="MANE-Select" id="ENST00000651502.1">
    <property type="protein sequence ID" value="ENSP00000498757.1"/>
    <property type="RefSeq nucleotide sequence ID" value="NM_005199.5"/>
    <property type="RefSeq protein sequence ID" value="NP_005190.4"/>
</dbReference>
<dbReference type="UCSC" id="uc002vsx.1">
    <molecule id="P07510-1"/>
    <property type="organism name" value="human"/>
</dbReference>
<dbReference type="AGR" id="HGNC:1967"/>
<dbReference type="CTD" id="1146"/>
<dbReference type="DisGeNET" id="1146"/>
<dbReference type="GeneCards" id="CHRNG"/>
<dbReference type="HGNC" id="HGNC:1967">
    <property type="gene designation" value="CHRNG"/>
</dbReference>
<dbReference type="HPA" id="ENSG00000196811">
    <property type="expression patterns" value="Tissue enriched (skeletal)"/>
</dbReference>
<dbReference type="MalaCards" id="CHRNG"/>
<dbReference type="MIM" id="100730">
    <property type="type" value="gene"/>
</dbReference>
<dbReference type="MIM" id="253290">
    <property type="type" value="phenotype"/>
</dbReference>
<dbReference type="MIM" id="265000">
    <property type="type" value="phenotype"/>
</dbReference>
<dbReference type="neXtProt" id="NX_P07510"/>
<dbReference type="OpenTargets" id="ENSG00000196811"/>
<dbReference type="Orphanet" id="2990">
    <property type="disease" value="Autosomal recessive multiple pterygium syndrome"/>
</dbReference>
<dbReference type="Orphanet" id="33108">
    <property type="disease" value="Lethal multiple pterygium syndrome"/>
</dbReference>
<dbReference type="PharmGKB" id="PA26499"/>
<dbReference type="VEuPathDB" id="HostDB:ENSG00000196811"/>
<dbReference type="eggNOG" id="KOG3645">
    <property type="taxonomic scope" value="Eukaryota"/>
</dbReference>
<dbReference type="GeneTree" id="ENSGT00940000160041"/>
<dbReference type="HOGENOM" id="CLU_018074_1_4_1"/>
<dbReference type="InParanoid" id="P07510"/>
<dbReference type="OMA" id="CVDACNL"/>
<dbReference type="OrthoDB" id="5975154at2759"/>
<dbReference type="PAN-GO" id="P07510">
    <property type="GO annotations" value="9 GO annotations based on evolutionary models"/>
</dbReference>
<dbReference type="PhylomeDB" id="P07510"/>
<dbReference type="TreeFam" id="TF315605"/>
<dbReference type="PathwayCommons" id="P07510"/>
<dbReference type="Reactome" id="R-HSA-629587">
    <property type="pathway name" value="Highly sodium permeable postsynaptic acetylcholine nicotinic receptors"/>
</dbReference>
<dbReference type="SignaLink" id="P07510"/>
<dbReference type="BioGRID-ORCS" id="1146">
    <property type="hits" value="26 hits in 1149 CRISPR screens"/>
</dbReference>
<dbReference type="GeneWiki" id="CHRNG"/>
<dbReference type="GenomeRNAi" id="1146"/>
<dbReference type="Pharos" id="P07510">
    <property type="development level" value="Tclin"/>
</dbReference>
<dbReference type="PRO" id="PR:P07510"/>
<dbReference type="Proteomes" id="UP000005640">
    <property type="component" value="Chromosome 2"/>
</dbReference>
<dbReference type="RNAct" id="P07510">
    <property type="molecule type" value="protein"/>
</dbReference>
<dbReference type="Bgee" id="ENSG00000196811">
    <property type="expression patterns" value="Expressed in gastrocnemius and 49 other cell types or tissues"/>
</dbReference>
<dbReference type="ExpressionAtlas" id="P07510">
    <property type="expression patterns" value="baseline and differential"/>
</dbReference>
<dbReference type="GO" id="GO:0005892">
    <property type="term" value="C:acetylcholine-gated channel complex"/>
    <property type="evidence" value="ECO:0000318"/>
    <property type="project" value="GO_Central"/>
</dbReference>
<dbReference type="GO" id="GO:0043005">
    <property type="term" value="C:neuron projection"/>
    <property type="evidence" value="ECO:0000318"/>
    <property type="project" value="GO_Central"/>
</dbReference>
<dbReference type="GO" id="GO:0005886">
    <property type="term" value="C:plasma membrane"/>
    <property type="evidence" value="ECO:0000318"/>
    <property type="project" value="GO_Central"/>
</dbReference>
<dbReference type="GO" id="GO:0045211">
    <property type="term" value="C:postsynaptic membrane"/>
    <property type="evidence" value="ECO:0007669"/>
    <property type="project" value="UniProtKB-SubCell"/>
</dbReference>
<dbReference type="GO" id="GO:0045202">
    <property type="term" value="C:synapse"/>
    <property type="evidence" value="ECO:0000318"/>
    <property type="project" value="GO_Central"/>
</dbReference>
<dbReference type="GO" id="GO:0015464">
    <property type="term" value="F:acetylcholine receptor activity"/>
    <property type="evidence" value="ECO:0000318"/>
    <property type="project" value="GO_Central"/>
</dbReference>
<dbReference type="GO" id="GO:0022848">
    <property type="term" value="F:acetylcholine-gated monoatomic cation-selective channel activity"/>
    <property type="evidence" value="ECO:0000318"/>
    <property type="project" value="GO_Central"/>
</dbReference>
<dbReference type="GO" id="GO:0015267">
    <property type="term" value="F:channel activity"/>
    <property type="evidence" value="ECO:0000304"/>
    <property type="project" value="ProtInc"/>
</dbReference>
<dbReference type="GO" id="GO:1904315">
    <property type="term" value="F:transmitter-gated monoatomic ion channel activity involved in regulation of postsynaptic membrane potential"/>
    <property type="evidence" value="ECO:0000250"/>
    <property type="project" value="UniProtKB"/>
</dbReference>
<dbReference type="GO" id="GO:0095500">
    <property type="term" value="P:acetylcholine receptor signaling pathway"/>
    <property type="evidence" value="ECO:0000318"/>
    <property type="project" value="GO_Central"/>
</dbReference>
<dbReference type="GO" id="GO:0007268">
    <property type="term" value="P:chemical synaptic transmission"/>
    <property type="evidence" value="ECO:0000318"/>
    <property type="project" value="GO_Central"/>
</dbReference>
<dbReference type="GO" id="GO:0051899">
    <property type="term" value="P:membrane depolarization"/>
    <property type="evidence" value="ECO:0000318"/>
    <property type="project" value="GO_Central"/>
</dbReference>
<dbReference type="GO" id="GO:0034220">
    <property type="term" value="P:monoatomic ion transmembrane transport"/>
    <property type="evidence" value="ECO:0000318"/>
    <property type="project" value="GO_Central"/>
</dbReference>
<dbReference type="GO" id="GO:0006936">
    <property type="term" value="P:muscle contraction"/>
    <property type="evidence" value="ECO:0000304"/>
    <property type="project" value="ProtInc"/>
</dbReference>
<dbReference type="GO" id="GO:0007165">
    <property type="term" value="P:signal transduction"/>
    <property type="evidence" value="ECO:0000304"/>
    <property type="project" value="ProtInc"/>
</dbReference>
<dbReference type="CDD" id="cd19029">
    <property type="entry name" value="LGIC_ECD_nAChR_G"/>
    <property type="match status" value="1"/>
</dbReference>
<dbReference type="CDD" id="cd19064">
    <property type="entry name" value="LGIC_TM_nAChR"/>
    <property type="match status" value="1"/>
</dbReference>
<dbReference type="FunFam" id="1.20.58.390:FF:000010">
    <property type="entry name" value="Nicotinic acetylcholine receptor subunit epsilon"/>
    <property type="match status" value="1"/>
</dbReference>
<dbReference type="FunFam" id="1.20.58.390:FF:000036">
    <property type="entry name" value="Nicotinic acetylcholine receptor subunit gamma"/>
    <property type="match status" value="1"/>
</dbReference>
<dbReference type="FunFam" id="2.70.170.10:FF:000012">
    <property type="entry name" value="Nicotinic acetylcholine receptor subunit gamma"/>
    <property type="match status" value="1"/>
</dbReference>
<dbReference type="Gene3D" id="2.70.170.10">
    <property type="entry name" value="Neurotransmitter-gated ion-channel ligand-binding domain"/>
    <property type="match status" value="1"/>
</dbReference>
<dbReference type="Gene3D" id="1.20.58.390">
    <property type="entry name" value="Neurotransmitter-gated ion-channel transmembrane domain"/>
    <property type="match status" value="2"/>
</dbReference>
<dbReference type="InterPro" id="IPR006202">
    <property type="entry name" value="Neur_chan_lig-bd"/>
</dbReference>
<dbReference type="InterPro" id="IPR036734">
    <property type="entry name" value="Neur_chan_lig-bd_sf"/>
</dbReference>
<dbReference type="InterPro" id="IPR006201">
    <property type="entry name" value="Neur_channel"/>
</dbReference>
<dbReference type="InterPro" id="IPR036719">
    <property type="entry name" value="Neuro-gated_channel_TM_sf"/>
</dbReference>
<dbReference type="InterPro" id="IPR038050">
    <property type="entry name" value="Neuro_actylchol_rec"/>
</dbReference>
<dbReference type="InterPro" id="IPR006029">
    <property type="entry name" value="Neurotrans-gated_channel_TM"/>
</dbReference>
<dbReference type="InterPro" id="IPR018000">
    <property type="entry name" value="Neurotransmitter_ion_chnl_CS"/>
</dbReference>
<dbReference type="InterPro" id="IPR002394">
    <property type="entry name" value="Nicotinic_acetylcholine_rcpt"/>
</dbReference>
<dbReference type="PANTHER" id="PTHR18945">
    <property type="entry name" value="NEUROTRANSMITTER GATED ION CHANNEL"/>
    <property type="match status" value="1"/>
</dbReference>
<dbReference type="Pfam" id="PF02931">
    <property type="entry name" value="Neur_chan_LBD"/>
    <property type="match status" value="1"/>
</dbReference>
<dbReference type="Pfam" id="PF02932">
    <property type="entry name" value="Neur_chan_memb"/>
    <property type="match status" value="1"/>
</dbReference>
<dbReference type="PRINTS" id="PR00254">
    <property type="entry name" value="NICOTINICR"/>
</dbReference>
<dbReference type="PRINTS" id="PR00252">
    <property type="entry name" value="NRIONCHANNEL"/>
</dbReference>
<dbReference type="SUPFAM" id="SSF90112">
    <property type="entry name" value="Neurotransmitter-gated ion-channel transmembrane pore"/>
    <property type="match status" value="1"/>
</dbReference>
<dbReference type="SUPFAM" id="SSF63712">
    <property type="entry name" value="Nicotinic receptor ligand binding domain-like"/>
    <property type="match status" value="1"/>
</dbReference>
<dbReference type="PROSITE" id="PS00236">
    <property type="entry name" value="NEUROTR_ION_CHANNEL"/>
    <property type="match status" value="1"/>
</dbReference>
<feature type="signal peptide" evidence="3">
    <location>
        <begin position="1"/>
        <end position="22"/>
    </location>
</feature>
<feature type="chain" id="PRO_0000000334" description="Acetylcholine receptor subunit gamma">
    <location>
        <begin position="23"/>
        <end position="517"/>
    </location>
</feature>
<feature type="topological domain" description="Extracellular" evidence="3">
    <location>
        <begin position="23"/>
        <end position="240"/>
    </location>
</feature>
<feature type="transmembrane region" description="Helical" evidence="3">
    <location>
        <begin position="241"/>
        <end position="265"/>
    </location>
</feature>
<feature type="transmembrane region" description="Helical" evidence="3">
    <location>
        <begin position="275"/>
        <end position="293"/>
    </location>
</feature>
<feature type="transmembrane region" description="Helical" evidence="3">
    <location>
        <begin position="309"/>
        <end position="330"/>
    </location>
</feature>
<feature type="topological domain" description="Cytoplasmic" evidence="3">
    <location>
        <begin position="331"/>
        <end position="474"/>
    </location>
</feature>
<feature type="transmembrane region" description="Helical" evidence="3">
    <location>
        <begin position="475"/>
        <end position="495"/>
    </location>
</feature>
<feature type="glycosylation site" description="N-linked (GlcNAc...) asparagine" evidence="3">
    <location>
        <position position="52"/>
    </location>
</feature>
<feature type="glycosylation site" description="N-linked (GlcNAc...) asparagine" evidence="3">
    <location>
        <position position="163"/>
    </location>
</feature>
<feature type="disulfide bond" evidence="1">
    <location>
        <begin position="150"/>
        <end position="164"/>
    </location>
</feature>
<feature type="splice variant" id="VSP_055775" description="In isoform 2." evidence="6">
    <original>NVDGVFEVALYCNVLVSPDGCIYWLPPAIFRSACSISVTYFPFDWQNCSLIFQ</original>
    <variation>K</variation>
    <location>
        <begin position="117"/>
        <end position="169"/>
    </location>
</feature>
<feature type="sequence variant" id="VAR_030753" description="In EVMPS and LMPS; dbSNP:rs267606726." evidence="5">
    <original>V</original>
    <variation>G</variation>
    <location>
        <position position="107"/>
    </location>
</feature>
<feature type="sequence variant" id="VAR_030754" description="In dbSNP:rs2289080.">
    <original>A</original>
    <variation>T</variation>
    <location>
        <position position="149"/>
    </location>
</feature>
<feature type="sequence variant" id="VAR_030755" description="In EVMPS and LMPS; dbSNP:rs121912670." evidence="4">
    <original>R</original>
    <variation>C</variation>
    <location>
        <position position="239"/>
    </location>
</feature>
<feature type="sequence conflict" description="In Ref. 5; AAI11803." evidence="7" ref="5">
    <original>T</original>
    <variation>S</variation>
    <location>
        <position position="189"/>
    </location>
</feature>
<evidence type="ECO:0000250" key="1"/>
<evidence type="ECO:0000250" key="2">
    <source>
        <dbReference type="UniProtKB" id="P13536"/>
    </source>
</evidence>
<evidence type="ECO:0000255" key="3"/>
<evidence type="ECO:0000269" key="4">
    <source>
    </source>
</evidence>
<evidence type="ECO:0000269" key="5">
    <source>
    </source>
</evidence>
<evidence type="ECO:0000303" key="6">
    <source>
    </source>
</evidence>
<evidence type="ECO:0000305" key="7"/>
<evidence type="ECO:0000312" key="8">
    <source>
        <dbReference type="HGNC" id="HGNC:1967"/>
    </source>
</evidence>
<protein>
    <recommendedName>
        <fullName evidence="7">Acetylcholine receptor subunit gamma</fullName>
    </recommendedName>
</protein>
<name>ACHG_HUMAN</name>